<keyword id="KW-0547">Nucleotide-binding</keyword>
<protein>
    <recommendedName>
        <fullName evidence="1">Nucleotide-binding protein Bcen_1944</fullName>
    </recommendedName>
</protein>
<feature type="chain" id="PRO_0000261921" description="Nucleotide-binding protein Bcen_1944">
    <location>
        <begin position="1"/>
        <end position="161"/>
    </location>
</feature>
<name>Y1944_BURO1</name>
<reference key="1">
    <citation type="submission" date="2006-05" db="EMBL/GenBank/DDBJ databases">
        <title>Complete sequence of chromosome 1 of Burkholderia cenocepacia AU 1054.</title>
        <authorList>
            <consortium name="US DOE Joint Genome Institute"/>
            <person name="Copeland A."/>
            <person name="Lucas S."/>
            <person name="Lapidus A."/>
            <person name="Barry K."/>
            <person name="Detter J.C."/>
            <person name="Glavina del Rio T."/>
            <person name="Hammon N."/>
            <person name="Israni S."/>
            <person name="Dalin E."/>
            <person name="Tice H."/>
            <person name="Pitluck S."/>
            <person name="Chain P."/>
            <person name="Malfatti S."/>
            <person name="Shin M."/>
            <person name="Vergez L."/>
            <person name="Schmutz J."/>
            <person name="Larimer F."/>
            <person name="Land M."/>
            <person name="Hauser L."/>
            <person name="Kyrpides N."/>
            <person name="Lykidis A."/>
            <person name="LiPuma J.J."/>
            <person name="Konstantinidis K."/>
            <person name="Tiedje J.M."/>
            <person name="Richardson P."/>
        </authorList>
    </citation>
    <scope>NUCLEOTIDE SEQUENCE [LARGE SCALE GENOMIC DNA]</scope>
    <source>
        <strain>AU 1054</strain>
    </source>
</reference>
<organism>
    <name type="scientific">Burkholderia orbicola (strain AU 1054)</name>
    <dbReference type="NCBI Taxonomy" id="331271"/>
    <lineage>
        <taxon>Bacteria</taxon>
        <taxon>Pseudomonadati</taxon>
        <taxon>Pseudomonadota</taxon>
        <taxon>Betaproteobacteria</taxon>
        <taxon>Burkholderiales</taxon>
        <taxon>Burkholderiaceae</taxon>
        <taxon>Burkholderia</taxon>
        <taxon>Burkholderia cepacia complex</taxon>
        <taxon>Burkholderia orbicola</taxon>
    </lineage>
</organism>
<gene>
    <name type="ordered locus">Bcen_1944</name>
</gene>
<proteinExistence type="inferred from homology"/>
<accession>Q1BU58</accession>
<evidence type="ECO:0000255" key="1">
    <source>
        <dbReference type="HAMAP-Rule" id="MF_00632"/>
    </source>
</evidence>
<sequence length="161" mass="18064">MPSFDVVSEANMIEVKNAIEQSNKEISTRFDFKGSDARVEQKERELTLFADDDFKLGQVKDVLIGKLAKRNVDVRFLDYGKVEKIGGDKVKQVVTVKKGVTGDLAKKIVRLVKDSKIKVQASIQGDAVRISGTKRDDLQSTIAMLRKDVTDTPLDFNNFRD</sequence>
<comment type="function">
    <text evidence="1">Nucleotide-binding protein.</text>
</comment>
<comment type="similarity">
    <text evidence="1">Belongs to the YajQ family.</text>
</comment>
<dbReference type="EMBL" id="CP000378">
    <property type="protein sequence ID" value="ABF76847.1"/>
    <property type="molecule type" value="Genomic_DNA"/>
</dbReference>
<dbReference type="SMR" id="Q1BU58"/>
<dbReference type="HOGENOM" id="CLU_099839_1_0_4"/>
<dbReference type="GO" id="GO:0005829">
    <property type="term" value="C:cytosol"/>
    <property type="evidence" value="ECO:0007669"/>
    <property type="project" value="TreeGrafter"/>
</dbReference>
<dbReference type="GO" id="GO:0000166">
    <property type="term" value="F:nucleotide binding"/>
    <property type="evidence" value="ECO:0007669"/>
    <property type="project" value="TreeGrafter"/>
</dbReference>
<dbReference type="CDD" id="cd11740">
    <property type="entry name" value="YajQ_like"/>
    <property type="match status" value="1"/>
</dbReference>
<dbReference type="Gene3D" id="3.30.70.990">
    <property type="entry name" value="YajQ-like, domain 2"/>
    <property type="match status" value="1"/>
</dbReference>
<dbReference type="HAMAP" id="MF_00632">
    <property type="entry name" value="YajQ"/>
    <property type="match status" value="1"/>
</dbReference>
<dbReference type="InterPro" id="IPR007551">
    <property type="entry name" value="DUF520"/>
</dbReference>
<dbReference type="InterPro" id="IPR035570">
    <property type="entry name" value="UPF0234_N"/>
</dbReference>
<dbReference type="InterPro" id="IPR036183">
    <property type="entry name" value="YajQ-like_sf"/>
</dbReference>
<dbReference type="NCBIfam" id="NF003819">
    <property type="entry name" value="PRK05412.1"/>
    <property type="match status" value="1"/>
</dbReference>
<dbReference type="PANTHER" id="PTHR30476">
    <property type="entry name" value="UPF0234 PROTEIN YAJQ"/>
    <property type="match status" value="1"/>
</dbReference>
<dbReference type="PANTHER" id="PTHR30476:SF0">
    <property type="entry name" value="UPF0234 PROTEIN YAJQ"/>
    <property type="match status" value="1"/>
</dbReference>
<dbReference type="Pfam" id="PF04461">
    <property type="entry name" value="DUF520"/>
    <property type="match status" value="1"/>
</dbReference>
<dbReference type="SUPFAM" id="SSF89963">
    <property type="entry name" value="YajQ-like"/>
    <property type="match status" value="2"/>
</dbReference>